<evidence type="ECO:0000250" key="1"/>
<evidence type="ECO:0000305" key="2"/>
<evidence type="ECO:0007829" key="3">
    <source>
        <dbReference type="PDB" id="8QSZ"/>
    </source>
</evidence>
<sequence length="123" mass="14127">MNQPERYELIELMGLPKVTYELDSKSPNAAVVTLEKEDHTLANMLANQLLSDERVLFAGYKVPHPLNHNFILRVQTVEDCSPKQVIVDAAKSLITHLEEIKVNFMREWELKMISVEGVEMEFS</sequence>
<feature type="chain" id="PRO_0000149314" description="DNA-directed RNA polymerase II subunit RPB11">
    <location>
        <begin position="1"/>
        <end position="123"/>
    </location>
</feature>
<feature type="helix" evidence="3">
    <location>
        <begin position="6"/>
        <end position="9"/>
    </location>
</feature>
<feature type="strand" evidence="3">
    <location>
        <begin position="17"/>
        <end position="26"/>
    </location>
</feature>
<feature type="strand" evidence="3">
    <location>
        <begin position="29"/>
        <end position="35"/>
    </location>
</feature>
<feature type="helix" evidence="3">
    <location>
        <begin position="39"/>
        <end position="50"/>
    </location>
</feature>
<feature type="strand" evidence="3">
    <location>
        <begin position="55"/>
        <end position="61"/>
    </location>
</feature>
<feature type="strand" evidence="3">
    <location>
        <begin position="69"/>
        <end position="76"/>
    </location>
</feature>
<feature type="helix" evidence="3">
    <location>
        <begin position="82"/>
        <end position="115"/>
    </location>
</feature>
<reference key="1">
    <citation type="journal article" date="1997" name="Gene">
        <title>Gene organization and protein sequence of the small subunits of Schizosaccharomyces pombe RNA polymerase II.</title>
        <authorList>
            <person name="Sakurai H."/>
            <person name="Ishihama A."/>
        </authorList>
    </citation>
    <scope>NUCLEOTIDE SEQUENCE [GENOMIC DNA / MRNA]</scope>
    <source>
        <strain>972 / ATCC 24843</strain>
        <strain>JY741</strain>
    </source>
</reference>
<reference key="2">
    <citation type="journal article" date="1997" name="Bioorg. Khim.">
        <title>Molecular cloning of rpb5+, rpb7+ and rpb11+ genes of the fission yeast Schizosaccharomyces pombe: completing primary structure of all indispensable subunits of its RNA polymerase II.</title>
        <authorList>
            <person name="Shpakovski G.V."/>
            <person name="Lebedenko E.N."/>
        </authorList>
    </citation>
    <scope>NUCLEOTIDE SEQUENCE [MRNA]</scope>
    <source>
        <strain>972 / ATCC 24843</strain>
    </source>
</reference>
<reference key="3">
    <citation type="journal article" date="2002" name="Nature">
        <title>The genome sequence of Schizosaccharomyces pombe.</title>
        <authorList>
            <person name="Wood V."/>
            <person name="Gwilliam R."/>
            <person name="Rajandream M.A."/>
            <person name="Lyne M.H."/>
            <person name="Lyne R."/>
            <person name="Stewart A."/>
            <person name="Sgouros J.G."/>
            <person name="Peat N."/>
            <person name="Hayles J."/>
            <person name="Baker S.G."/>
            <person name="Basham D."/>
            <person name="Bowman S."/>
            <person name="Brooks K."/>
            <person name="Brown D."/>
            <person name="Brown S."/>
            <person name="Chillingworth T."/>
            <person name="Churcher C.M."/>
            <person name="Collins M."/>
            <person name="Connor R."/>
            <person name="Cronin A."/>
            <person name="Davis P."/>
            <person name="Feltwell T."/>
            <person name="Fraser A."/>
            <person name="Gentles S."/>
            <person name="Goble A."/>
            <person name="Hamlin N."/>
            <person name="Harris D.E."/>
            <person name="Hidalgo J."/>
            <person name="Hodgson G."/>
            <person name="Holroyd S."/>
            <person name="Hornsby T."/>
            <person name="Howarth S."/>
            <person name="Huckle E.J."/>
            <person name="Hunt S."/>
            <person name="Jagels K."/>
            <person name="James K.D."/>
            <person name="Jones L."/>
            <person name="Jones M."/>
            <person name="Leather S."/>
            <person name="McDonald S."/>
            <person name="McLean J."/>
            <person name="Mooney P."/>
            <person name="Moule S."/>
            <person name="Mungall K.L."/>
            <person name="Murphy L.D."/>
            <person name="Niblett D."/>
            <person name="Odell C."/>
            <person name="Oliver K."/>
            <person name="O'Neil S."/>
            <person name="Pearson D."/>
            <person name="Quail M.A."/>
            <person name="Rabbinowitsch E."/>
            <person name="Rutherford K.M."/>
            <person name="Rutter S."/>
            <person name="Saunders D."/>
            <person name="Seeger K."/>
            <person name="Sharp S."/>
            <person name="Skelton J."/>
            <person name="Simmonds M.N."/>
            <person name="Squares R."/>
            <person name="Squares S."/>
            <person name="Stevens K."/>
            <person name="Taylor K."/>
            <person name="Taylor R.G."/>
            <person name="Tivey A."/>
            <person name="Walsh S.V."/>
            <person name="Warren T."/>
            <person name="Whitehead S."/>
            <person name="Woodward J.R."/>
            <person name="Volckaert G."/>
            <person name="Aert R."/>
            <person name="Robben J."/>
            <person name="Grymonprez B."/>
            <person name="Weltjens I."/>
            <person name="Vanstreels E."/>
            <person name="Rieger M."/>
            <person name="Schaefer M."/>
            <person name="Mueller-Auer S."/>
            <person name="Gabel C."/>
            <person name="Fuchs M."/>
            <person name="Duesterhoeft A."/>
            <person name="Fritzc C."/>
            <person name="Holzer E."/>
            <person name="Moestl D."/>
            <person name="Hilbert H."/>
            <person name="Borzym K."/>
            <person name="Langer I."/>
            <person name="Beck A."/>
            <person name="Lehrach H."/>
            <person name="Reinhardt R."/>
            <person name="Pohl T.M."/>
            <person name="Eger P."/>
            <person name="Zimmermann W."/>
            <person name="Wedler H."/>
            <person name="Wambutt R."/>
            <person name="Purnelle B."/>
            <person name="Goffeau A."/>
            <person name="Cadieu E."/>
            <person name="Dreano S."/>
            <person name="Gloux S."/>
            <person name="Lelaure V."/>
            <person name="Mottier S."/>
            <person name="Galibert F."/>
            <person name="Aves S.J."/>
            <person name="Xiang Z."/>
            <person name="Hunt C."/>
            <person name="Moore K."/>
            <person name="Hurst S.M."/>
            <person name="Lucas M."/>
            <person name="Rochet M."/>
            <person name="Gaillardin C."/>
            <person name="Tallada V.A."/>
            <person name="Garzon A."/>
            <person name="Thode G."/>
            <person name="Daga R.R."/>
            <person name="Cruzado L."/>
            <person name="Jimenez J."/>
            <person name="Sanchez M."/>
            <person name="del Rey F."/>
            <person name="Benito J."/>
            <person name="Dominguez A."/>
            <person name="Revuelta J.L."/>
            <person name="Moreno S."/>
            <person name="Armstrong J."/>
            <person name="Forsburg S.L."/>
            <person name="Cerutti L."/>
            <person name="Lowe T."/>
            <person name="McCombie W.R."/>
            <person name="Paulsen I."/>
            <person name="Potashkin J."/>
            <person name="Shpakovski G.V."/>
            <person name="Ussery D."/>
            <person name="Barrell B.G."/>
            <person name="Nurse P."/>
        </authorList>
    </citation>
    <scope>NUCLEOTIDE SEQUENCE [LARGE SCALE GENOMIC DNA]</scope>
    <source>
        <strain>972 / ATCC 24843</strain>
    </source>
</reference>
<keyword id="KW-0002">3D-structure</keyword>
<keyword id="KW-0240">DNA-directed RNA polymerase</keyword>
<keyword id="KW-0539">Nucleus</keyword>
<keyword id="KW-1185">Reference proteome</keyword>
<keyword id="KW-0804">Transcription</keyword>
<comment type="function">
    <text evidence="1">DNA-dependent RNA polymerase catalyzes the transcription of DNA into RNA using the four ribonucleoside triphosphates as substrates. Component of RNA polymerase II which synthesizes mRNA precursors and many functional non-coding RNAs. Pol II is the central component of the basal RNA polymerase II transcription machinery. It is composed of mobile elements that move relative to each other. RPB11 is part of the core element with the central large cleft (By similarity).</text>
</comment>
<comment type="subunit">
    <text evidence="1">Component of the RNA polymerase II (Pol II) complex consisting of 12 subunits.</text>
</comment>
<comment type="subcellular location">
    <subcellularLocation>
        <location evidence="1">Nucleus</location>
    </subcellularLocation>
</comment>
<comment type="similarity">
    <text evidence="2">Belongs to the archaeal Rpo11/eukaryotic RPB11/RPC19 RNA polymerase subunit family.</text>
</comment>
<gene>
    <name type="primary">rpb11</name>
    <name type="ORF">SPAC3A12.07</name>
</gene>
<protein>
    <recommendedName>
        <fullName>DNA-directed RNA polymerase II subunit RPB11</fullName>
        <shortName>RNA polymerase II subunit B11</shortName>
    </recommendedName>
    <alternativeName>
        <fullName>DNA-directed RNA polymerase II 14.1 kDa polypeptide</fullName>
    </alternativeName>
</protein>
<name>RPB11_SCHPO</name>
<dbReference type="EMBL" id="D89597">
    <property type="protein sequence ID" value="BAA22806.1"/>
    <property type="molecule type" value="Genomic_DNA"/>
</dbReference>
<dbReference type="EMBL" id="D85902">
    <property type="protein sequence ID" value="BAA22801.1"/>
    <property type="molecule type" value="mRNA"/>
</dbReference>
<dbReference type="EMBL" id="AF027822">
    <property type="protein sequence ID" value="AAB92517.1"/>
    <property type="molecule type" value="mRNA"/>
</dbReference>
<dbReference type="EMBL" id="CU329670">
    <property type="protein sequence ID" value="CAB08752.1"/>
    <property type="molecule type" value="Genomic_DNA"/>
</dbReference>
<dbReference type="PIR" id="T38675">
    <property type="entry name" value="T38675"/>
</dbReference>
<dbReference type="RefSeq" id="NP_593333.1">
    <property type="nucleotide sequence ID" value="NM_001018765.2"/>
</dbReference>
<dbReference type="PDB" id="3H0G">
    <property type="method" value="X-ray"/>
    <property type="resolution" value="3.65 A"/>
    <property type="chains" value="K/W=1-123"/>
</dbReference>
<dbReference type="PDB" id="5U0S">
    <property type="method" value="EM"/>
    <property type="resolution" value="7.80 A"/>
    <property type="chains" value="k=1-123"/>
</dbReference>
<dbReference type="PDB" id="8QSZ">
    <property type="method" value="EM"/>
    <property type="resolution" value="2.67 A"/>
    <property type="chains" value="K=1-123"/>
</dbReference>
<dbReference type="PDBsum" id="3H0G"/>
<dbReference type="PDBsum" id="5U0S"/>
<dbReference type="PDBsum" id="8QSZ"/>
<dbReference type="EMDB" id="EMD-18643"/>
<dbReference type="EMDB" id="EMD-8480"/>
<dbReference type="SMR" id="P87123"/>
<dbReference type="BioGRID" id="279544">
    <property type="interactions" value="11"/>
</dbReference>
<dbReference type="ComplexPortal" id="CPX-2661">
    <property type="entry name" value="DNA-directed RNA polymerase II complex"/>
</dbReference>
<dbReference type="FunCoup" id="P87123">
    <property type="interactions" value="292"/>
</dbReference>
<dbReference type="IntAct" id="P87123">
    <property type="interactions" value="2"/>
</dbReference>
<dbReference type="STRING" id="284812.P87123"/>
<dbReference type="iPTMnet" id="P87123"/>
<dbReference type="PaxDb" id="4896-SPAC3A12.07.1"/>
<dbReference type="EnsemblFungi" id="SPAC3A12.07.1">
    <property type="protein sequence ID" value="SPAC3A12.07.1:pep"/>
    <property type="gene ID" value="SPAC3A12.07"/>
</dbReference>
<dbReference type="GeneID" id="2543112"/>
<dbReference type="KEGG" id="spo:2543112"/>
<dbReference type="PomBase" id="SPAC3A12.07">
    <property type="gene designation" value="rpb11"/>
</dbReference>
<dbReference type="VEuPathDB" id="FungiDB:SPAC3A12.07"/>
<dbReference type="eggNOG" id="KOG4392">
    <property type="taxonomic scope" value="Eukaryota"/>
</dbReference>
<dbReference type="HOGENOM" id="CLU_090381_2_1_1"/>
<dbReference type="InParanoid" id="P87123"/>
<dbReference type="OMA" id="MNQPERY"/>
<dbReference type="PhylomeDB" id="P87123"/>
<dbReference type="Reactome" id="R-SPO-113418">
    <property type="pathway name" value="Formation of the Early Elongation Complex"/>
</dbReference>
<dbReference type="Reactome" id="R-SPO-5578749">
    <property type="pathway name" value="Transcriptional regulation by small RNAs"/>
</dbReference>
<dbReference type="Reactome" id="R-SPO-674695">
    <property type="pathway name" value="RNA Polymerase II Pre-transcription Events"/>
</dbReference>
<dbReference type="Reactome" id="R-SPO-6781823">
    <property type="pathway name" value="Formation of TC-NER Pre-Incision Complex"/>
</dbReference>
<dbReference type="Reactome" id="R-SPO-6782135">
    <property type="pathway name" value="Dual incision in TC-NER"/>
</dbReference>
<dbReference type="Reactome" id="R-SPO-6782210">
    <property type="pathway name" value="Gap-filling DNA repair synthesis and ligation in TC-NER"/>
</dbReference>
<dbReference type="Reactome" id="R-SPO-6796648">
    <property type="pathway name" value="TP53 Regulates Transcription of DNA Repair Genes"/>
</dbReference>
<dbReference type="Reactome" id="R-SPO-6807505">
    <property type="pathway name" value="RNA polymerase II transcribes snRNA genes"/>
</dbReference>
<dbReference type="Reactome" id="R-SPO-72086">
    <property type="pathway name" value="mRNA Capping"/>
</dbReference>
<dbReference type="Reactome" id="R-SPO-72163">
    <property type="pathway name" value="mRNA Splicing - Major Pathway"/>
</dbReference>
<dbReference type="Reactome" id="R-SPO-72203">
    <property type="pathway name" value="Processing of Capped Intron-Containing Pre-mRNA"/>
</dbReference>
<dbReference type="Reactome" id="R-SPO-73776">
    <property type="pathway name" value="RNA Polymerase II Promoter Escape"/>
</dbReference>
<dbReference type="Reactome" id="R-SPO-73779">
    <property type="pathway name" value="RNA Polymerase II Transcription Pre-Initiation And Promoter Opening"/>
</dbReference>
<dbReference type="Reactome" id="R-SPO-75953">
    <property type="pathway name" value="RNA Polymerase II Transcription Initiation"/>
</dbReference>
<dbReference type="Reactome" id="R-SPO-76042">
    <property type="pathway name" value="RNA Polymerase II Transcription Initiation And Promoter Clearance"/>
</dbReference>
<dbReference type="Reactome" id="R-SPO-77075">
    <property type="pathway name" value="RNA Pol II CTD phosphorylation and interaction with CE"/>
</dbReference>
<dbReference type="Reactome" id="R-SPO-9018519">
    <property type="pathway name" value="Estrogen-dependent gene expression"/>
</dbReference>
<dbReference type="EvolutionaryTrace" id="P87123"/>
<dbReference type="PRO" id="PR:P87123"/>
<dbReference type="Proteomes" id="UP000002485">
    <property type="component" value="Chromosome I"/>
</dbReference>
<dbReference type="GO" id="GO:0005829">
    <property type="term" value="C:cytosol"/>
    <property type="evidence" value="ECO:0007005"/>
    <property type="project" value="PomBase"/>
</dbReference>
<dbReference type="GO" id="GO:0005634">
    <property type="term" value="C:nucleus"/>
    <property type="evidence" value="ECO:0007005"/>
    <property type="project" value="PomBase"/>
</dbReference>
<dbReference type="GO" id="GO:0005665">
    <property type="term" value="C:RNA polymerase II, core complex"/>
    <property type="evidence" value="ECO:0000314"/>
    <property type="project" value="PomBase"/>
</dbReference>
<dbReference type="GO" id="GO:0016591">
    <property type="term" value="C:RNA polymerase II, holoenzyme"/>
    <property type="evidence" value="ECO:0000269"/>
    <property type="project" value="PomBase"/>
</dbReference>
<dbReference type="GO" id="GO:0003677">
    <property type="term" value="F:DNA binding"/>
    <property type="evidence" value="ECO:0007669"/>
    <property type="project" value="InterPro"/>
</dbReference>
<dbReference type="GO" id="GO:0003899">
    <property type="term" value="F:DNA-directed RNA polymerase activity"/>
    <property type="evidence" value="ECO:0007669"/>
    <property type="project" value="InterPro"/>
</dbReference>
<dbReference type="GO" id="GO:0046983">
    <property type="term" value="F:protein dimerization activity"/>
    <property type="evidence" value="ECO:0007669"/>
    <property type="project" value="InterPro"/>
</dbReference>
<dbReference type="GO" id="GO:0006366">
    <property type="term" value="P:transcription by RNA polymerase II"/>
    <property type="evidence" value="ECO:0000269"/>
    <property type="project" value="PomBase"/>
</dbReference>
<dbReference type="GO" id="GO:0006367">
    <property type="term" value="P:transcription initiation at RNA polymerase II promoter"/>
    <property type="evidence" value="ECO:0000314"/>
    <property type="project" value="PomBase"/>
</dbReference>
<dbReference type="CDD" id="cd06926">
    <property type="entry name" value="RNAP_II_RPB11"/>
    <property type="match status" value="1"/>
</dbReference>
<dbReference type="FunFam" id="3.30.1360.10:FF:000037">
    <property type="entry name" value="DNA-directed RNA polymerase II subunit RPB11"/>
    <property type="match status" value="1"/>
</dbReference>
<dbReference type="Gene3D" id="3.30.1360.10">
    <property type="entry name" value="RNA polymerase, RBP11-like subunit"/>
    <property type="match status" value="1"/>
</dbReference>
<dbReference type="HAMAP" id="MF_00261">
    <property type="entry name" value="RNApol_arch_Rpo11"/>
    <property type="match status" value="1"/>
</dbReference>
<dbReference type="InterPro" id="IPR037685">
    <property type="entry name" value="RBP11"/>
</dbReference>
<dbReference type="InterPro" id="IPR036603">
    <property type="entry name" value="RBP11-like"/>
</dbReference>
<dbReference type="InterPro" id="IPR009025">
    <property type="entry name" value="RBP11-like_dimer"/>
</dbReference>
<dbReference type="InterPro" id="IPR008193">
    <property type="entry name" value="RNA_pol_Rpb11_13-16kDa_CS"/>
</dbReference>
<dbReference type="InterPro" id="IPR022905">
    <property type="entry name" value="Rpo11-like"/>
</dbReference>
<dbReference type="PANTHER" id="PTHR13946">
    <property type="entry name" value="DNA-DIRECTED RNA POLYMERASE I,II,III"/>
    <property type="match status" value="1"/>
</dbReference>
<dbReference type="PANTHER" id="PTHR13946:SF16">
    <property type="entry name" value="DNA-DIRECTED RNA POLYMERASE II SUBUNIT RPB11"/>
    <property type="match status" value="1"/>
</dbReference>
<dbReference type="Pfam" id="PF13656">
    <property type="entry name" value="RNA_pol_L_2"/>
    <property type="match status" value="1"/>
</dbReference>
<dbReference type="SUPFAM" id="SSF55257">
    <property type="entry name" value="RBP11-like subunits of RNA polymerase"/>
    <property type="match status" value="1"/>
</dbReference>
<dbReference type="PROSITE" id="PS01154">
    <property type="entry name" value="RNA_POL_L_13KD"/>
    <property type="match status" value="1"/>
</dbReference>
<accession>P87123</accession>
<organism>
    <name type="scientific">Schizosaccharomyces pombe (strain 972 / ATCC 24843)</name>
    <name type="common">Fission yeast</name>
    <dbReference type="NCBI Taxonomy" id="284812"/>
    <lineage>
        <taxon>Eukaryota</taxon>
        <taxon>Fungi</taxon>
        <taxon>Dikarya</taxon>
        <taxon>Ascomycota</taxon>
        <taxon>Taphrinomycotina</taxon>
        <taxon>Schizosaccharomycetes</taxon>
        <taxon>Schizosaccharomycetales</taxon>
        <taxon>Schizosaccharomycetaceae</taxon>
        <taxon>Schizosaccharomyces</taxon>
    </lineage>
</organism>
<proteinExistence type="evidence at protein level"/>